<keyword id="KW-0240">DNA-directed RNA polymerase</keyword>
<keyword id="KW-0548">Nucleotidyltransferase</keyword>
<keyword id="KW-0804">Transcription</keyword>
<keyword id="KW-0808">Transferase</keyword>
<evidence type="ECO:0000255" key="1">
    <source>
        <dbReference type="HAMAP-Rule" id="MF_01321"/>
    </source>
</evidence>
<dbReference type="EC" id="2.7.7.6" evidence="1"/>
<dbReference type="EMBL" id="CP001488">
    <property type="protein sequence ID" value="ACO01019.1"/>
    <property type="molecule type" value="Genomic_DNA"/>
</dbReference>
<dbReference type="RefSeq" id="WP_004686417.1">
    <property type="nucleotide sequence ID" value="NC_012441.1"/>
</dbReference>
<dbReference type="SMR" id="C0RJL1"/>
<dbReference type="KEGG" id="bmi:BMEA_A1288"/>
<dbReference type="HOGENOM" id="CLU_000524_4_0_5"/>
<dbReference type="PRO" id="PR:C0RJL1"/>
<dbReference type="Proteomes" id="UP000001748">
    <property type="component" value="Chromosome I"/>
</dbReference>
<dbReference type="GO" id="GO:0000428">
    <property type="term" value="C:DNA-directed RNA polymerase complex"/>
    <property type="evidence" value="ECO:0007669"/>
    <property type="project" value="UniProtKB-KW"/>
</dbReference>
<dbReference type="GO" id="GO:0003677">
    <property type="term" value="F:DNA binding"/>
    <property type="evidence" value="ECO:0007669"/>
    <property type="project" value="UniProtKB-UniRule"/>
</dbReference>
<dbReference type="GO" id="GO:0003899">
    <property type="term" value="F:DNA-directed RNA polymerase activity"/>
    <property type="evidence" value="ECO:0007669"/>
    <property type="project" value="UniProtKB-UniRule"/>
</dbReference>
<dbReference type="GO" id="GO:0032549">
    <property type="term" value="F:ribonucleoside binding"/>
    <property type="evidence" value="ECO:0007669"/>
    <property type="project" value="InterPro"/>
</dbReference>
<dbReference type="GO" id="GO:0006351">
    <property type="term" value="P:DNA-templated transcription"/>
    <property type="evidence" value="ECO:0007669"/>
    <property type="project" value="UniProtKB-UniRule"/>
</dbReference>
<dbReference type="CDD" id="cd00653">
    <property type="entry name" value="RNA_pol_B_RPB2"/>
    <property type="match status" value="1"/>
</dbReference>
<dbReference type="FunFam" id="2.40.50.100:FF:000006">
    <property type="entry name" value="DNA-directed RNA polymerase subunit beta"/>
    <property type="match status" value="1"/>
</dbReference>
<dbReference type="FunFam" id="3.90.1800.10:FF:000001">
    <property type="entry name" value="DNA-directed RNA polymerase subunit beta"/>
    <property type="match status" value="1"/>
</dbReference>
<dbReference type="Gene3D" id="2.40.50.100">
    <property type="match status" value="1"/>
</dbReference>
<dbReference type="Gene3D" id="2.40.50.150">
    <property type="match status" value="1"/>
</dbReference>
<dbReference type="Gene3D" id="3.90.1100.10">
    <property type="match status" value="2"/>
</dbReference>
<dbReference type="Gene3D" id="2.30.150.10">
    <property type="entry name" value="DNA-directed RNA polymerase, beta subunit, external 1 domain"/>
    <property type="match status" value="1"/>
</dbReference>
<dbReference type="Gene3D" id="2.40.270.10">
    <property type="entry name" value="DNA-directed RNA polymerase, subunit 2, domain 6"/>
    <property type="match status" value="2"/>
</dbReference>
<dbReference type="Gene3D" id="3.90.1800.10">
    <property type="entry name" value="RNA polymerase alpha subunit dimerisation domain"/>
    <property type="match status" value="1"/>
</dbReference>
<dbReference type="Gene3D" id="3.90.1110.10">
    <property type="entry name" value="RNA polymerase Rpb2, domain 2"/>
    <property type="match status" value="2"/>
</dbReference>
<dbReference type="HAMAP" id="MF_01321">
    <property type="entry name" value="RNApol_bact_RpoB"/>
    <property type="match status" value="1"/>
</dbReference>
<dbReference type="InterPro" id="IPR042107">
    <property type="entry name" value="DNA-dir_RNA_pol_bsu_ext_1_sf"/>
</dbReference>
<dbReference type="InterPro" id="IPR019462">
    <property type="entry name" value="DNA-dir_RNA_pol_bsu_external_1"/>
</dbReference>
<dbReference type="InterPro" id="IPR015712">
    <property type="entry name" value="DNA-dir_RNA_pol_su2"/>
</dbReference>
<dbReference type="InterPro" id="IPR007120">
    <property type="entry name" value="DNA-dir_RNAP_su2_dom"/>
</dbReference>
<dbReference type="InterPro" id="IPR037033">
    <property type="entry name" value="DNA-dir_RNAP_su2_hyb_sf"/>
</dbReference>
<dbReference type="InterPro" id="IPR010243">
    <property type="entry name" value="RNA_pol_bsu_bac"/>
</dbReference>
<dbReference type="InterPro" id="IPR007121">
    <property type="entry name" value="RNA_pol_bsu_CS"/>
</dbReference>
<dbReference type="InterPro" id="IPR007644">
    <property type="entry name" value="RNA_pol_bsu_protrusion"/>
</dbReference>
<dbReference type="InterPro" id="IPR007642">
    <property type="entry name" value="RNA_pol_Rpb2_2"/>
</dbReference>
<dbReference type="InterPro" id="IPR037034">
    <property type="entry name" value="RNA_pol_Rpb2_2_sf"/>
</dbReference>
<dbReference type="InterPro" id="IPR007645">
    <property type="entry name" value="RNA_pol_Rpb2_3"/>
</dbReference>
<dbReference type="InterPro" id="IPR007641">
    <property type="entry name" value="RNA_pol_Rpb2_7"/>
</dbReference>
<dbReference type="InterPro" id="IPR014724">
    <property type="entry name" value="RNA_pol_RPB2_OB-fold"/>
</dbReference>
<dbReference type="NCBIfam" id="NF001616">
    <property type="entry name" value="PRK00405.1"/>
    <property type="match status" value="1"/>
</dbReference>
<dbReference type="NCBIfam" id="TIGR02013">
    <property type="entry name" value="rpoB"/>
    <property type="match status" value="1"/>
</dbReference>
<dbReference type="PANTHER" id="PTHR20856">
    <property type="entry name" value="DNA-DIRECTED RNA POLYMERASE I SUBUNIT 2"/>
    <property type="match status" value="1"/>
</dbReference>
<dbReference type="Pfam" id="PF04563">
    <property type="entry name" value="RNA_pol_Rpb2_1"/>
    <property type="match status" value="1"/>
</dbReference>
<dbReference type="Pfam" id="PF04561">
    <property type="entry name" value="RNA_pol_Rpb2_2"/>
    <property type="match status" value="2"/>
</dbReference>
<dbReference type="Pfam" id="PF04565">
    <property type="entry name" value="RNA_pol_Rpb2_3"/>
    <property type="match status" value="1"/>
</dbReference>
<dbReference type="Pfam" id="PF10385">
    <property type="entry name" value="RNA_pol_Rpb2_45"/>
    <property type="match status" value="1"/>
</dbReference>
<dbReference type="Pfam" id="PF00562">
    <property type="entry name" value="RNA_pol_Rpb2_6"/>
    <property type="match status" value="1"/>
</dbReference>
<dbReference type="Pfam" id="PF04560">
    <property type="entry name" value="RNA_pol_Rpb2_7"/>
    <property type="match status" value="1"/>
</dbReference>
<dbReference type="SUPFAM" id="SSF64484">
    <property type="entry name" value="beta and beta-prime subunits of DNA dependent RNA-polymerase"/>
    <property type="match status" value="1"/>
</dbReference>
<dbReference type="PROSITE" id="PS01166">
    <property type="entry name" value="RNA_POL_BETA"/>
    <property type="match status" value="1"/>
</dbReference>
<reference key="1">
    <citation type="submission" date="2009-03" db="EMBL/GenBank/DDBJ databases">
        <title>Brucella melitensis ATCC 23457 whole genome shotgun sequencing project.</title>
        <authorList>
            <person name="Setubal J.C."/>
            <person name="Boyle S."/>
            <person name="Crasta O.R."/>
            <person name="Gillespie J.J."/>
            <person name="Kenyon R.W."/>
            <person name="Lu J."/>
            <person name="Mane S."/>
            <person name="Nagrani S."/>
            <person name="Shallom J.M."/>
            <person name="Shallom S."/>
            <person name="Shukla M."/>
            <person name="Snyder E.E."/>
            <person name="Sobral B.W."/>
            <person name="Wattam A.R."/>
            <person name="Will R."/>
            <person name="Williams K."/>
            <person name="Yoo H."/>
            <person name="Munk C."/>
            <person name="Tapia R."/>
            <person name="Han C."/>
            <person name="Detter J.C."/>
            <person name="Bruce D."/>
            <person name="Brettin T.S."/>
        </authorList>
    </citation>
    <scope>NUCLEOTIDE SEQUENCE [LARGE SCALE GENOMIC DNA]</scope>
    <source>
        <strain>ATCC 23457</strain>
    </source>
</reference>
<comment type="function">
    <text evidence="1">DNA-dependent RNA polymerase catalyzes the transcription of DNA into RNA using the four ribonucleoside triphosphates as substrates.</text>
</comment>
<comment type="catalytic activity">
    <reaction evidence="1">
        <text>RNA(n) + a ribonucleoside 5'-triphosphate = RNA(n+1) + diphosphate</text>
        <dbReference type="Rhea" id="RHEA:21248"/>
        <dbReference type="Rhea" id="RHEA-COMP:14527"/>
        <dbReference type="Rhea" id="RHEA-COMP:17342"/>
        <dbReference type="ChEBI" id="CHEBI:33019"/>
        <dbReference type="ChEBI" id="CHEBI:61557"/>
        <dbReference type="ChEBI" id="CHEBI:140395"/>
        <dbReference type="EC" id="2.7.7.6"/>
    </reaction>
</comment>
<comment type="subunit">
    <text evidence="1">The RNAP catalytic core consists of 2 alpha, 1 beta, 1 beta' and 1 omega subunit. When a sigma factor is associated with the core the holoenzyme is formed, which can initiate transcription.</text>
</comment>
<comment type="similarity">
    <text evidence="1">Belongs to the RNA polymerase beta chain family.</text>
</comment>
<sequence length="1377" mass="153725">MAQTHSFNGRKRVRKFFGKIPEVAEMPNLIEVQKASYDQFLMVEEPSGGRPDEGLQAVFKSVFPIQDFSGASMLEFVRYEFDPPKFDVDECRQRDLTYSAPLKVTLRLIVFDIDEDTGAKSIKDIKEQDVYMGDMPLMTDNGTFIVNGTERVIVSQMHRSPGVFFDHDKGKTHSSGKLLFAARVIPYRGSWLDIEFDSKDIVYARIDRRRKLPATTLLMALGMDGEEILSTFYKTVTYTRDGDNWRIPYSAERFKGMKIISDLVDADTGEVVLEAGKKLTARAAKQLAEKGLKAIKATEDDLFGSYLAEDVVNYATGEIYLEAGDEIDEKVLKTLIDTGETEINVLDIDHVNIGAYIRNTLAVDKNESRQEALFDIYRVMRPGEPPTMDSAEAMFHSLFFDSERYDLSAVGRVKMNMRLDLDAEDTVRVLRKEDILAVVKMLVELRDGRGEIDDIDNLGNRRVRSVGELMENQYRVGLLRMERAIKERMSSIEIDTVMPQDLINAKPAAAAVREFFGSSQLSQFMDQTNPLSEITHKRRLSALGPGGLTRERAGFEVRDVHPTHYGRICPIETPEGPNIGLINSLATFARVNKYGFIESPYRKVVDGKVTNDVVYLSAMEEAKHSVAQVNVELDEQGGFVDEFVICRHAGEVMMAPRENVDLMDVSPKQLVSVAAALIPFLENDDANRALMGSNMQRQAVPLVRAEAPFVGTGMEPIVARDSGAAIAARRGGIVDQVDATRIVIRATEELDPSKSGVDIYRLQKFQRSNQSTCINQRPLVRVGDRIHKGDIIADGPSTDLGDLALGRNVLVAFMPWNGYNYEDSILLSEKIVSDDVFTSIHIEEFEVAARDTKLGPEEITRDIPNVSEEALKNLDEAGIVYIGAEVHPGDILVGKITPKGESPMTPEEKLLRAIFGEKASDVRDTSMRMPPGTYGTVVEVRVFNRHGVEKDERAMAIEREEIERLAKDRDDEQAILDRNVYGRLVDMIDGKVAAAGPKGFKKGTTITRELMTEYPRSQWWQFAVEDEKLQGELEALRSQYDDSKKLLEARFMDKVEKVQRGDEMPPGVMKMVKVFVAVKRKIQPGDKMAGRHGNKGVVSRILPVEDMPFLEDGTHADIVLNPLGVPSRMNVGQILETHLGWACAGMGKKIGELLDVYRKTANIEPLRQTLEHIYPDNDRNEPVRSYDDDAILMLANQVKRGVSIATPVFDGAVEADINAMLTDAGLATSGQSTLYDGRTGEPFDRQVTMGYIYMLKLHHLVDDKIHARSIGPYSLVTQQPLGGKAQFGGQRFGEMEVWALEAYGAAYTLQEMLTVKSDDVAGRTKVYEAIVRGDDTFEAGIPESFNVLVKEMRSLGLNVELDDTREAEQPALPDAAE</sequence>
<gene>
    <name evidence="1" type="primary">rpoB</name>
    <name type="ordered locus">BMEA_A1288</name>
</gene>
<feature type="chain" id="PRO_1000165793" description="DNA-directed RNA polymerase subunit beta">
    <location>
        <begin position="1"/>
        <end position="1377"/>
    </location>
</feature>
<organism>
    <name type="scientific">Brucella melitensis biotype 2 (strain ATCC 23457)</name>
    <dbReference type="NCBI Taxonomy" id="546272"/>
    <lineage>
        <taxon>Bacteria</taxon>
        <taxon>Pseudomonadati</taxon>
        <taxon>Pseudomonadota</taxon>
        <taxon>Alphaproteobacteria</taxon>
        <taxon>Hyphomicrobiales</taxon>
        <taxon>Brucellaceae</taxon>
        <taxon>Brucella/Ochrobactrum group</taxon>
        <taxon>Brucella</taxon>
    </lineage>
</organism>
<protein>
    <recommendedName>
        <fullName evidence="1">DNA-directed RNA polymerase subunit beta</fullName>
        <shortName evidence="1">RNAP subunit beta</shortName>
        <ecNumber evidence="1">2.7.7.6</ecNumber>
    </recommendedName>
    <alternativeName>
        <fullName evidence="1">RNA polymerase subunit beta</fullName>
    </alternativeName>
    <alternativeName>
        <fullName evidence="1">Transcriptase subunit beta</fullName>
    </alternativeName>
</protein>
<accession>C0RJL1</accession>
<name>RPOB_BRUMB</name>
<proteinExistence type="inferred from homology"/>